<reference key="1">
    <citation type="journal article" date="2009" name="PLoS ONE">
        <title>Complete genome sequence of Francisella tularensis subspecies holarctica FTNF002-00.</title>
        <authorList>
            <person name="Barabote R.D."/>
            <person name="Xie G."/>
            <person name="Brettin T.S."/>
            <person name="Hinrichs S.H."/>
            <person name="Fey P.D."/>
            <person name="Jay J.J."/>
            <person name="Engle J.L."/>
            <person name="Godbole S.D."/>
            <person name="Noronha J.M."/>
            <person name="Scheuermann R.H."/>
            <person name="Zhou L.W."/>
            <person name="Lion C."/>
            <person name="Dempsey M.P."/>
        </authorList>
    </citation>
    <scope>NUCLEOTIDE SEQUENCE [LARGE SCALE GENOMIC DNA]</scope>
    <source>
        <strain>FTNF002-00 / FTA</strain>
    </source>
</reference>
<protein>
    <recommendedName>
        <fullName evidence="1">Crossover junction endodeoxyribonuclease RuvC</fullName>
        <ecNumber evidence="1">3.1.21.10</ecNumber>
    </recommendedName>
    <alternativeName>
        <fullName evidence="1">Holliday junction nuclease RuvC</fullName>
    </alternativeName>
    <alternativeName>
        <fullName evidence="1">Holliday junction resolvase RuvC</fullName>
    </alternativeName>
</protein>
<organism>
    <name type="scientific">Francisella tularensis subsp. holarctica (strain FTNF002-00 / FTA)</name>
    <dbReference type="NCBI Taxonomy" id="458234"/>
    <lineage>
        <taxon>Bacteria</taxon>
        <taxon>Pseudomonadati</taxon>
        <taxon>Pseudomonadota</taxon>
        <taxon>Gammaproteobacteria</taxon>
        <taxon>Thiotrichales</taxon>
        <taxon>Francisellaceae</taxon>
        <taxon>Francisella</taxon>
    </lineage>
</organism>
<sequence>MVILGIDPGSRITGFGVIKVQDNKIYYVASGCIQITEITTPKRLKQIADGITQIINIYAPTEAAIEQIFMFQNPMGAIKLGQARGVAMCTLAINNLEVSEYSAKQIKQAVVGTGGAAKSQVQHMVQSLLGLSKKPPEDAADALAIAICHYHSSKSLAKISGASRVSQKRIK</sequence>
<feature type="chain" id="PRO_1000002755" description="Crossover junction endodeoxyribonuclease RuvC">
    <location>
        <begin position="1"/>
        <end position="171"/>
    </location>
</feature>
<feature type="active site" evidence="1">
    <location>
        <position position="7"/>
    </location>
</feature>
<feature type="active site" evidence="1">
    <location>
        <position position="66"/>
    </location>
</feature>
<feature type="active site" evidence="1">
    <location>
        <position position="138"/>
    </location>
</feature>
<feature type="binding site" evidence="1">
    <location>
        <position position="7"/>
    </location>
    <ligand>
        <name>Mg(2+)</name>
        <dbReference type="ChEBI" id="CHEBI:18420"/>
        <label>1</label>
    </ligand>
</feature>
<feature type="binding site" evidence="1">
    <location>
        <position position="66"/>
    </location>
    <ligand>
        <name>Mg(2+)</name>
        <dbReference type="ChEBI" id="CHEBI:18420"/>
        <label>2</label>
    </ligand>
</feature>
<feature type="binding site" evidence="1">
    <location>
        <position position="138"/>
    </location>
    <ligand>
        <name>Mg(2+)</name>
        <dbReference type="ChEBI" id="CHEBI:18420"/>
        <label>1</label>
    </ligand>
</feature>
<accession>A7NBV3</accession>
<dbReference type="EC" id="3.1.21.10" evidence="1"/>
<dbReference type="EMBL" id="CP000803">
    <property type="protein sequence ID" value="ABU61456.1"/>
    <property type="molecule type" value="Genomic_DNA"/>
</dbReference>
<dbReference type="RefSeq" id="WP_003015702.1">
    <property type="nucleotide sequence ID" value="NC_009749.1"/>
</dbReference>
<dbReference type="SMR" id="A7NBV3"/>
<dbReference type="KEGG" id="fta:FTA_0980"/>
<dbReference type="HOGENOM" id="CLU_091257_2_1_6"/>
<dbReference type="GO" id="GO:0005737">
    <property type="term" value="C:cytoplasm"/>
    <property type="evidence" value="ECO:0007669"/>
    <property type="project" value="UniProtKB-SubCell"/>
</dbReference>
<dbReference type="GO" id="GO:0048476">
    <property type="term" value="C:Holliday junction resolvase complex"/>
    <property type="evidence" value="ECO:0007669"/>
    <property type="project" value="UniProtKB-UniRule"/>
</dbReference>
<dbReference type="GO" id="GO:0008821">
    <property type="term" value="F:crossover junction DNA endonuclease activity"/>
    <property type="evidence" value="ECO:0007669"/>
    <property type="project" value="UniProtKB-UniRule"/>
</dbReference>
<dbReference type="GO" id="GO:0003677">
    <property type="term" value="F:DNA binding"/>
    <property type="evidence" value="ECO:0007669"/>
    <property type="project" value="UniProtKB-KW"/>
</dbReference>
<dbReference type="GO" id="GO:0000287">
    <property type="term" value="F:magnesium ion binding"/>
    <property type="evidence" value="ECO:0007669"/>
    <property type="project" value="UniProtKB-UniRule"/>
</dbReference>
<dbReference type="GO" id="GO:0006310">
    <property type="term" value="P:DNA recombination"/>
    <property type="evidence" value="ECO:0007669"/>
    <property type="project" value="UniProtKB-UniRule"/>
</dbReference>
<dbReference type="GO" id="GO:0006281">
    <property type="term" value="P:DNA repair"/>
    <property type="evidence" value="ECO:0007669"/>
    <property type="project" value="UniProtKB-UniRule"/>
</dbReference>
<dbReference type="CDD" id="cd16962">
    <property type="entry name" value="RuvC"/>
    <property type="match status" value="1"/>
</dbReference>
<dbReference type="FunFam" id="3.30.420.10:FF:000002">
    <property type="entry name" value="Crossover junction endodeoxyribonuclease RuvC"/>
    <property type="match status" value="1"/>
</dbReference>
<dbReference type="Gene3D" id="3.30.420.10">
    <property type="entry name" value="Ribonuclease H-like superfamily/Ribonuclease H"/>
    <property type="match status" value="1"/>
</dbReference>
<dbReference type="HAMAP" id="MF_00034">
    <property type="entry name" value="RuvC"/>
    <property type="match status" value="1"/>
</dbReference>
<dbReference type="InterPro" id="IPR012337">
    <property type="entry name" value="RNaseH-like_sf"/>
</dbReference>
<dbReference type="InterPro" id="IPR036397">
    <property type="entry name" value="RNaseH_sf"/>
</dbReference>
<dbReference type="InterPro" id="IPR020563">
    <property type="entry name" value="X-over_junc_endoDNase_Mg_BS"/>
</dbReference>
<dbReference type="InterPro" id="IPR002176">
    <property type="entry name" value="X-over_junc_endoDNase_RuvC"/>
</dbReference>
<dbReference type="NCBIfam" id="NF000711">
    <property type="entry name" value="PRK00039.2-1"/>
    <property type="match status" value="1"/>
</dbReference>
<dbReference type="NCBIfam" id="TIGR00228">
    <property type="entry name" value="ruvC"/>
    <property type="match status" value="1"/>
</dbReference>
<dbReference type="PANTHER" id="PTHR30194">
    <property type="entry name" value="CROSSOVER JUNCTION ENDODEOXYRIBONUCLEASE RUVC"/>
    <property type="match status" value="1"/>
</dbReference>
<dbReference type="PANTHER" id="PTHR30194:SF3">
    <property type="entry name" value="CROSSOVER JUNCTION ENDODEOXYRIBONUCLEASE RUVC"/>
    <property type="match status" value="1"/>
</dbReference>
<dbReference type="Pfam" id="PF02075">
    <property type="entry name" value="RuvC"/>
    <property type="match status" value="1"/>
</dbReference>
<dbReference type="PRINTS" id="PR00696">
    <property type="entry name" value="RSOLVASERUVC"/>
</dbReference>
<dbReference type="SUPFAM" id="SSF53098">
    <property type="entry name" value="Ribonuclease H-like"/>
    <property type="match status" value="1"/>
</dbReference>
<dbReference type="PROSITE" id="PS01321">
    <property type="entry name" value="RUVC"/>
    <property type="match status" value="1"/>
</dbReference>
<proteinExistence type="inferred from homology"/>
<evidence type="ECO:0000255" key="1">
    <source>
        <dbReference type="HAMAP-Rule" id="MF_00034"/>
    </source>
</evidence>
<comment type="function">
    <text evidence="1">The RuvA-RuvB-RuvC complex processes Holliday junction (HJ) DNA during genetic recombination and DNA repair. Endonuclease that resolves HJ intermediates. Cleaves cruciform DNA by making single-stranded nicks across the HJ at symmetrical positions within the homologous arms, yielding a 5'-phosphate and a 3'-hydroxyl group; requires a central core of homology in the junction. The consensus cleavage sequence is 5'-(A/T)TT(C/G)-3'. Cleavage occurs on the 3'-side of the TT dinucleotide at the point of strand exchange. HJ branch migration catalyzed by RuvA-RuvB allows RuvC to scan DNA until it finds its consensus sequence, where it cleaves and resolves the cruciform DNA.</text>
</comment>
<comment type="catalytic activity">
    <reaction evidence="1">
        <text>Endonucleolytic cleavage at a junction such as a reciprocal single-stranded crossover between two homologous DNA duplexes (Holliday junction).</text>
        <dbReference type="EC" id="3.1.21.10"/>
    </reaction>
</comment>
<comment type="cofactor">
    <cofactor evidence="1">
        <name>Mg(2+)</name>
        <dbReference type="ChEBI" id="CHEBI:18420"/>
    </cofactor>
    <text evidence="1">Binds 2 Mg(2+) ion per subunit.</text>
</comment>
<comment type="subunit">
    <text evidence="1">Homodimer which binds Holliday junction (HJ) DNA. The HJ becomes 2-fold symmetrical on binding to RuvC with unstacked arms; it has a different conformation from HJ DNA in complex with RuvA. In the full resolvosome a probable DNA-RuvA(4)-RuvB(12)-RuvC(2) complex forms which resolves the HJ.</text>
</comment>
<comment type="subcellular location">
    <subcellularLocation>
        <location evidence="1">Cytoplasm</location>
    </subcellularLocation>
</comment>
<comment type="similarity">
    <text evidence="1">Belongs to the RuvC family.</text>
</comment>
<keyword id="KW-0963">Cytoplasm</keyword>
<keyword id="KW-0227">DNA damage</keyword>
<keyword id="KW-0233">DNA recombination</keyword>
<keyword id="KW-0234">DNA repair</keyword>
<keyword id="KW-0238">DNA-binding</keyword>
<keyword id="KW-0255">Endonuclease</keyword>
<keyword id="KW-0378">Hydrolase</keyword>
<keyword id="KW-0460">Magnesium</keyword>
<keyword id="KW-0479">Metal-binding</keyword>
<keyword id="KW-0540">Nuclease</keyword>
<gene>
    <name evidence="1" type="primary">ruvC</name>
    <name type="ordered locus">FTA_0980</name>
</gene>
<name>RUVC_FRATF</name>